<comment type="catalytic activity">
    <reaction evidence="1">
        <text>1-(5-phospho-beta-D-ribosyl)-ATP + H2O = 1-(5-phospho-beta-D-ribosyl)-5'-AMP + diphosphate + H(+)</text>
        <dbReference type="Rhea" id="RHEA:22828"/>
        <dbReference type="ChEBI" id="CHEBI:15377"/>
        <dbReference type="ChEBI" id="CHEBI:15378"/>
        <dbReference type="ChEBI" id="CHEBI:33019"/>
        <dbReference type="ChEBI" id="CHEBI:59457"/>
        <dbReference type="ChEBI" id="CHEBI:73183"/>
        <dbReference type="EC" id="3.6.1.31"/>
    </reaction>
</comment>
<comment type="pathway">
    <text evidence="1">Amino-acid biosynthesis; L-histidine biosynthesis; L-histidine from 5-phospho-alpha-D-ribose 1-diphosphate: step 2/9.</text>
</comment>
<comment type="subcellular location">
    <subcellularLocation>
        <location evidence="1">Cytoplasm</location>
    </subcellularLocation>
</comment>
<comment type="similarity">
    <text evidence="1">Belongs to the PRA-PH family.</text>
</comment>
<evidence type="ECO:0000255" key="1">
    <source>
        <dbReference type="HAMAP-Rule" id="MF_01020"/>
    </source>
</evidence>
<sequence length="95" mass="11064">MSDNVIDKLYSIILDRMKTMKEGSYTVELIKRGKHYVAQKVGEESTEAIIASLVESQQRFVEEVSDLIYHLLVLMALENVTPQDVYKELERRMKK</sequence>
<feature type="chain" id="PRO_0000136397" description="Phosphoribosyl-ATP pyrophosphatase">
    <location>
        <begin position="1"/>
        <end position="95"/>
    </location>
</feature>
<accession>Q4J8I7</accession>
<dbReference type="EC" id="3.6.1.31" evidence="1"/>
<dbReference type="EMBL" id="CP000077">
    <property type="protein sequence ID" value="AAY80893.1"/>
    <property type="molecule type" value="Genomic_DNA"/>
</dbReference>
<dbReference type="RefSeq" id="WP_011278395.1">
    <property type="nucleotide sequence ID" value="NC_007181.1"/>
</dbReference>
<dbReference type="SMR" id="Q4J8I7"/>
<dbReference type="STRING" id="330779.Saci_1580"/>
<dbReference type="GeneID" id="14552073"/>
<dbReference type="GeneID" id="78441923"/>
<dbReference type="KEGG" id="sai:Saci_1580"/>
<dbReference type="PATRIC" id="fig|330779.12.peg.1520"/>
<dbReference type="eggNOG" id="arCOG02677">
    <property type="taxonomic scope" value="Archaea"/>
</dbReference>
<dbReference type="HOGENOM" id="CLU_123337_0_0_2"/>
<dbReference type="UniPathway" id="UPA00031">
    <property type="reaction ID" value="UER00007"/>
</dbReference>
<dbReference type="Proteomes" id="UP000001018">
    <property type="component" value="Chromosome"/>
</dbReference>
<dbReference type="GO" id="GO:0005737">
    <property type="term" value="C:cytoplasm"/>
    <property type="evidence" value="ECO:0007669"/>
    <property type="project" value="UniProtKB-SubCell"/>
</dbReference>
<dbReference type="GO" id="GO:0005524">
    <property type="term" value="F:ATP binding"/>
    <property type="evidence" value="ECO:0007669"/>
    <property type="project" value="UniProtKB-KW"/>
</dbReference>
<dbReference type="GO" id="GO:0004636">
    <property type="term" value="F:phosphoribosyl-ATP diphosphatase activity"/>
    <property type="evidence" value="ECO:0007669"/>
    <property type="project" value="UniProtKB-UniRule"/>
</dbReference>
<dbReference type="GO" id="GO:0000105">
    <property type="term" value="P:L-histidine biosynthetic process"/>
    <property type="evidence" value="ECO:0007669"/>
    <property type="project" value="UniProtKB-UniRule"/>
</dbReference>
<dbReference type="CDD" id="cd11534">
    <property type="entry name" value="NTP-PPase_HisIE_like"/>
    <property type="match status" value="1"/>
</dbReference>
<dbReference type="Gene3D" id="1.10.287.1080">
    <property type="entry name" value="MazG-like"/>
    <property type="match status" value="1"/>
</dbReference>
<dbReference type="HAMAP" id="MF_01020">
    <property type="entry name" value="HisE"/>
    <property type="match status" value="1"/>
</dbReference>
<dbReference type="InterPro" id="IPR008179">
    <property type="entry name" value="HisE"/>
</dbReference>
<dbReference type="InterPro" id="IPR021130">
    <property type="entry name" value="PRib-ATP_PPHydrolase-like"/>
</dbReference>
<dbReference type="NCBIfam" id="TIGR03188">
    <property type="entry name" value="histidine_hisI"/>
    <property type="match status" value="1"/>
</dbReference>
<dbReference type="PANTHER" id="PTHR42945">
    <property type="entry name" value="HISTIDINE BIOSYNTHESIS BIFUNCTIONAL PROTEIN"/>
    <property type="match status" value="1"/>
</dbReference>
<dbReference type="PANTHER" id="PTHR42945:SF1">
    <property type="entry name" value="HISTIDINE BIOSYNTHESIS BIFUNCTIONAL PROTEIN HIS7"/>
    <property type="match status" value="1"/>
</dbReference>
<dbReference type="Pfam" id="PF01503">
    <property type="entry name" value="PRA-PH"/>
    <property type="match status" value="1"/>
</dbReference>
<dbReference type="SUPFAM" id="SSF101386">
    <property type="entry name" value="all-alpha NTP pyrophosphatases"/>
    <property type="match status" value="1"/>
</dbReference>
<keyword id="KW-0028">Amino-acid biosynthesis</keyword>
<keyword id="KW-0067">ATP-binding</keyword>
<keyword id="KW-0963">Cytoplasm</keyword>
<keyword id="KW-0368">Histidine biosynthesis</keyword>
<keyword id="KW-0378">Hydrolase</keyword>
<keyword id="KW-0547">Nucleotide-binding</keyword>
<keyword id="KW-1185">Reference proteome</keyword>
<organism>
    <name type="scientific">Sulfolobus acidocaldarius (strain ATCC 33909 / DSM 639 / JCM 8929 / NBRC 15157 / NCIMB 11770)</name>
    <dbReference type="NCBI Taxonomy" id="330779"/>
    <lineage>
        <taxon>Archaea</taxon>
        <taxon>Thermoproteota</taxon>
        <taxon>Thermoprotei</taxon>
        <taxon>Sulfolobales</taxon>
        <taxon>Sulfolobaceae</taxon>
        <taxon>Sulfolobus</taxon>
    </lineage>
</organism>
<proteinExistence type="inferred from homology"/>
<name>HIS2_SULAC</name>
<reference key="1">
    <citation type="journal article" date="2005" name="J. Bacteriol.">
        <title>The genome of Sulfolobus acidocaldarius, a model organism of the Crenarchaeota.</title>
        <authorList>
            <person name="Chen L."/>
            <person name="Bruegger K."/>
            <person name="Skovgaard M."/>
            <person name="Redder P."/>
            <person name="She Q."/>
            <person name="Torarinsson E."/>
            <person name="Greve B."/>
            <person name="Awayez M."/>
            <person name="Zibat A."/>
            <person name="Klenk H.-P."/>
            <person name="Garrett R.A."/>
        </authorList>
    </citation>
    <scope>NUCLEOTIDE SEQUENCE [LARGE SCALE GENOMIC DNA]</scope>
    <source>
        <strain>ATCC 33909 / DSM 639 / JCM 8929 / NBRC 15157 / NCIMB 11770</strain>
    </source>
</reference>
<gene>
    <name evidence="1" type="primary">hisE</name>
    <name type="ordered locus">Saci_1580</name>
</gene>
<protein>
    <recommendedName>
        <fullName evidence="1">Phosphoribosyl-ATP pyrophosphatase</fullName>
        <shortName evidence="1">PRA-PH</shortName>
        <ecNumber evidence="1">3.6.1.31</ecNumber>
    </recommendedName>
</protein>